<organism>
    <name type="scientific">Yersinia pseudotuberculosis serotype I (strain IP32953)</name>
    <dbReference type="NCBI Taxonomy" id="273123"/>
    <lineage>
        <taxon>Bacteria</taxon>
        <taxon>Pseudomonadati</taxon>
        <taxon>Pseudomonadota</taxon>
        <taxon>Gammaproteobacteria</taxon>
        <taxon>Enterobacterales</taxon>
        <taxon>Yersiniaceae</taxon>
        <taxon>Yersinia</taxon>
    </lineage>
</organism>
<evidence type="ECO:0000255" key="1">
    <source>
        <dbReference type="HAMAP-Rule" id="MF_00518"/>
    </source>
</evidence>
<dbReference type="EC" id="3.1.1.96" evidence="1"/>
<dbReference type="EMBL" id="BX936398">
    <property type="protein sequence ID" value="CAH19268.1"/>
    <property type="molecule type" value="Genomic_DNA"/>
</dbReference>
<dbReference type="RefSeq" id="WP_002209009.1">
    <property type="nucleotide sequence ID" value="NZ_CP009712.1"/>
</dbReference>
<dbReference type="SMR" id="Q66GF4"/>
<dbReference type="GeneID" id="57974561"/>
<dbReference type="KEGG" id="ypo:BZ17_2567"/>
<dbReference type="KEGG" id="yps:YPTB0028"/>
<dbReference type="PATRIC" id="fig|273123.14.peg.2692"/>
<dbReference type="Proteomes" id="UP000001011">
    <property type="component" value="Chromosome"/>
</dbReference>
<dbReference type="GO" id="GO:0005737">
    <property type="term" value="C:cytoplasm"/>
    <property type="evidence" value="ECO:0007669"/>
    <property type="project" value="UniProtKB-SubCell"/>
</dbReference>
<dbReference type="GO" id="GO:0051500">
    <property type="term" value="F:D-tyrosyl-tRNA(Tyr) deacylase activity"/>
    <property type="evidence" value="ECO:0007669"/>
    <property type="project" value="TreeGrafter"/>
</dbReference>
<dbReference type="GO" id="GO:0106026">
    <property type="term" value="F:Gly-tRNA(Ala) deacylase activity"/>
    <property type="evidence" value="ECO:0007669"/>
    <property type="project" value="UniProtKB-UniRule"/>
</dbReference>
<dbReference type="GO" id="GO:0043908">
    <property type="term" value="F:Ser(Gly)-tRNA(Ala) hydrolase activity"/>
    <property type="evidence" value="ECO:0007669"/>
    <property type="project" value="UniProtKB-UniRule"/>
</dbReference>
<dbReference type="GO" id="GO:0000049">
    <property type="term" value="F:tRNA binding"/>
    <property type="evidence" value="ECO:0007669"/>
    <property type="project" value="UniProtKB-UniRule"/>
</dbReference>
<dbReference type="GO" id="GO:0019478">
    <property type="term" value="P:D-amino acid catabolic process"/>
    <property type="evidence" value="ECO:0007669"/>
    <property type="project" value="UniProtKB-UniRule"/>
</dbReference>
<dbReference type="CDD" id="cd00563">
    <property type="entry name" value="Dtyr_deacylase"/>
    <property type="match status" value="1"/>
</dbReference>
<dbReference type="FunFam" id="3.50.80.10:FF:000001">
    <property type="entry name" value="D-aminoacyl-tRNA deacylase"/>
    <property type="match status" value="1"/>
</dbReference>
<dbReference type="Gene3D" id="3.50.80.10">
    <property type="entry name" value="D-tyrosyl-tRNA(Tyr) deacylase"/>
    <property type="match status" value="1"/>
</dbReference>
<dbReference type="HAMAP" id="MF_00518">
    <property type="entry name" value="Deacylase_Dtd"/>
    <property type="match status" value="1"/>
</dbReference>
<dbReference type="InterPro" id="IPR003732">
    <property type="entry name" value="Daa-tRNA_deacyls_DTD"/>
</dbReference>
<dbReference type="InterPro" id="IPR023509">
    <property type="entry name" value="DTD-like_sf"/>
</dbReference>
<dbReference type="NCBIfam" id="TIGR00256">
    <property type="entry name" value="D-aminoacyl-tRNA deacylase"/>
    <property type="match status" value="1"/>
</dbReference>
<dbReference type="PANTHER" id="PTHR10472:SF5">
    <property type="entry name" value="D-AMINOACYL-TRNA DEACYLASE 1"/>
    <property type="match status" value="1"/>
</dbReference>
<dbReference type="PANTHER" id="PTHR10472">
    <property type="entry name" value="D-TYROSYL-TRNA TYR DEACYLASE"/>
    <property type="match status" value="1"/>
</dbReference>
<dbReference type="Pfam" id="PF02580">
    <property type="entry name" value="Tyr_Deacylase"/>
    <property type="match status" value="1"/>
</dbReference>
<dbReference type="SUPFAM" id="SSF69500">
    <property type="entry name" value="DTD-like"/>
    <property type="match status" value="1"/>
</dbReference>
<gene>
    <name evidence="1" type="primary">dtd</name>
    <name type="ordered locus">YPTB0028</name>
</gene>
<comment type="function">
    <text evidence="1">An aminoacyl-tRNA editing enzyme that deacylates mischarged D-aminoacyl-tRNAs. Also deacylates mischarged glycyl-tRNA(Ala), protecting cells against glycine mischarging by AlaRS. Acts via tRNA-based rather than protein-based catalysis; rejects L-amino acids rather than detecting D-amino acids in the active site. By recycling D-aminoacyl-tRNA to D-amino acids and free tRNA molecules, this enzyme counteracts the toxicity associated with the formation of D-aminoacyl-tRNA entities in vivo and helps enforce protein L-homochirality.</text>
</comment>
<comment type="catalytic activity">
    <reaction evidence="1">
        <text>glycyl-tRNA(Ala) + H2O = tRNA(Ala) + glycine + H(+)</text>
        <dbReference type="Rhea" id="RHEA:53744"/>
        <dbReference type="Rhea" id="RHEA-COMP:9657"/>
        <dbReference type="Rhea" id="RHEA-COMP:13640"/>
        <dbReference type="ChEBI" id="CHEBI:15377"/>
        <dbReference type="ChEBI" id="CHEBI:15378"/>
        <dbReference type="ChEBI" id="CHEBI:57305"/>
        <dbReference type="ChEBI" id="CHEBI:78442"/>
        <dbReference type="ChEBI" id="CHEBI:78522"/>
        <dbReference type="EC" id="3.1.1.96"/>
    </reaction>
</comment>
<comment type="catalytic activity">
    <reaction evidence="1">
        <text>a D-aminoacyl-tRNA + H2O = a tRNA + a D-alpha-amino acid + H(+)</text>
        <dbReference type="Rhea" id="RHEA:13953"/>
        <dbReference type="Rhea" id="RHEA-COMP:10123"/>
        <dbReference type="Rhea" id="RHEA-COMP:10124"/>
        <dbReference type="ChEBI" id="CHEBI:15377"/>
        <dbReference type="ChEBI" id="CHEBI:15378"/>
        <dbReference type="ChEBI" id="CHEBI:59871"/>
        <dbReference type="ChEBI" id="CHEBI:78442"/>
        <dbReference type="ChEBI" id="CHEBI:79333"/>
        <dbReference type="EC" id="3.1.1.96"/>
    </reaction>
</comment>
<comment type="subunit">
    <text evidence="1">Homodimer.</text>
</comment>
<comment type="subcellular location">
    <subcellularLocation>
        <location evidence="1">Cytoplasm</location>
    </subcellularLocation>
</comment>
<comment type="domain">
    <text evidence="1">A Gly-cisPro motif from one monomer fits into the active site of the other monomer to allow specific chiral rejection of L-amino acids.</text>
</comment>
<comment type="similarity">
    <text evidence="1">Belongs to the DTD family.</text>
</comment>
<proteinExistence type="inferred from homology"/>
<accession>Q66GF4</accession>
<protein>
    <recommendedName>
        <fullName evidence="1">D-aminoacyl-tRNA deacylase</fullName>
        <shortName evidence="1">DTD</shortName>
        <ecNumber evidence="1">3.1.1.96</ecNumber>
    </recommendedName>
    <alternativeName>
        <fullName evidence="1">Gly-tRNA(Ala) deacylase</fullName>
    </alternativeName>
</protein>
<feature type="chain" id="PRO_0000164624" description="D-aminoacyl-tRNA deacylase">
    <location>
        <begin position="1"/>
        <end position="145"/>
    </location>
</feature>
<feature type="short sequence motif" description="Gly-cisPro motif, important for rejection of L-amino acids" evidence="1">
    <location>
        <begin position="137"/>
        <end position="138"/>
    </location>
</feature>
<sequence>MIALIQRALSASVVVEGNIVGEIGPGLLVLLGVEQGDTEQKAQRLCERVLGYRIFSDENDKMNLNVQQAGGSVLVVSQFTLVADTQKGMRPSFSRGAIPQEADRLYQYFVAQCRERGVKTETGLFAADMKVSLVNDGPVTFWLQV</sequence>
<name>DTD_YERPS</name>
<keyword id="KW-0963">Cytoplasm</keyword>
<keyword id="KW-0378">Hydrolase</keyword>
<keyword id="KW-0694">RNA-binding</keyword>
<keyword id="KW-0820">tRNA-binding</keyword>
<reference key="1">
    <citation type="journal article" date="2004" name="Proc. Natl. Acad. Sci. U.S.A.">
        <title>Insights into the evolution of Yersinia pestis through whole-genome comparison with Yersinia pseudotuberculosis.</title>
        <authorList>
            <person name="Chain P.S.G."/>
            <person name="Carniel E."/>
            <person name="Larimer F.W."/>
            <person name="Lamerdin J."/>
            <person name="Stoutland P.O."/>
            <person name="Regala W.M."/>
            <person name="Georgescu A.M."/>
            <person name="Vergez L.M."/>
            <person name="Land M.L."/>
            <person name="Motin V.L."/>
            <person name="Brubaker R.R."/>
            <person name="Fowler J."/>
            <person name="Hinnebusch J."/>
            <person name="Marceau M."/>
            <person name="Medigue C."/>
            <person name="Simonet M."/>
            <person name="Chenal-Francisque V."/>
            <person name="Souza B."/>
            <person name="Dacheux D."/>
            <person name="Elliott J.M."/>
            <person name="Derbise A."/>
            <person name="Hauser L.J."/>
            <person name="Garcia E."/>
        </authorList>
    </citation>
    <scope>NUCLEOTIDE SEQUENCE [LARGE SCALE GENOMIC DNA]</scope>
    <source>
        <strain>IP32953</strain>
    </source>
</reference>